<protein>
    <recommendedName>
        <fullName>Glyceraldehyde-3-phosphate dehydrogenase 3, cytosolic</fullName>
        <ecNumber>1.2.1.12</ecNumber>
    </recommendedName>
</protein>
<dbReference type="EC" id="1.2.1.12"/>
<dbReference type="EMBL" id="U45856">
    <property type="protein sequence ID" value="AAA87579.1"/>
    <property type="molecule type" value="mRNA"/>
</dbReference>
<dbReference type="EMBL" id="L13431">
    <property type="protein sequence ID" value="AAA33465.1"/>
    <property type="molecule type" value="mRNA"/>
</dbReference>
<dbReference type="PIR" id="PQ0179">
    <property type="entry name" value="PQ0179"/>
</dbReference>
<dbReference type="PIR" id="T02722">
    <property type="entry name" value="T02722"/>
</dbReference>
<dbReference type="RefSeq" id="NP_001105385.1">
    <property type="nucleotide sequence ID" value="NM_001111915.2"/>
</dbReference>
<dbReference type="SMR" id="Q43247"/>
<dbReference type="FunCoup" id="Q43247">
    <property type="interactions" value="1243"/>
</dbReference>
<dbReference type="STRING" id="4577.Q43247"/>
<dbReference type="PaxDb" id="4577-GRMZM2G071630_P01"/>
<dbReference type="EnsemblPlants" id="Zm00001eb184000_T001">
    <property type="protein sequence ID" value="Zm00001eb184000_P001"/>
    <property type="gene ID" value="Zm00001eb184000"/>
</dbReference>
<dbReference type="GeneID" id="542333"/>
<dbReference type="Gramene" id="Zm00001eb184000_T001">
    <property type="protein sequence ID" value="Zm00001eb184000_P001"/>
    <property type="gene ID" value="Zm00001eb184000"/>
</dbReference>
<dbReference type="KEGG" id="zma:542333"/>
<dbReference type="eggNOG" id="KOG0657">
    <property type="taxonomic scope" value="Eukaryota"/>
</dbReference>
<dbReference type="InParanoid" id="Q43247"/>
<dbReference type="OMA" id="IRHMAST"/>
<dbReference type="OrthoDB" id="1152826at2759"/>
<dbReference type="UniPathway" id="UPA00109">
    <property type="reaction ID" value="UER00184"/>
</dbReference>
<dbReference type="Proteomes" id="UP000007305">
    <property type="component" value="Chromosome 4"/>
</dbReference>
<dbReference type="ExpressionAtlas" id="Q43247">
    <property type="expression patterns" value="baseline and differential"/>
</dbReference>
<dbReference type="GO" id="GO:0005829">
    <property type="term" value="C:cytosol"/>
    <property type="evidence" value="ECO:0000318"/>
    <property type="project" value="GO_Central"/>
</dbReference>
<dbReference type="GO" id="GO:0032991">
    <property type="term" value="C:protein-containing complex"/>
    <property type="evidence" value="ECO:0000304"/>
    <property type="project" value="AgBase"/>
</dbReference>
<dbReference type="GO" id="GO:0004365">
    <property type="term" value="F:glyceraldehyde-3-phosphate dehydrogenase (NAD+) (phosphorylating) activity"/>
    <property type="evidence" value="ECO:0000318"/>
    <property type="project" value="GO_Central"/>
</dbReference>
<dbReference type="GO" id="GO:0070403">
    <property type="term" value="F:NAD+ binding"/>
    <property type="evidence" value="ECO:0000304"/>
    <property type="project" value="AgBase"/>
</dbReference>
<dbReference type="GO" id="GO:0050661">
    <property type="term" value="F:NADP binding"/>
    <property type="evidence" value="ECO:0007669"/>
    <property type="project" value="InterPro"/>
</dbReference>
<dbReference type="GO" id="GO:0042301">
    <property type="term" value="F:phosphate ion binding"/>
    <property type="evidence" value="ECO:0000304"/>
    <property type="project" value="AgBase"/>
</dbReference>
<dbReference type="GO" id="GO:0006006">
    <property type="term" value="P:glucose metabolic process"/>
    <property type="evidence" value="ECO:0007669"/>
    <property type="project" value="InterPro"/>
</dbReference>
<dbReference type="GO" id="GO:0006096">
    <property type="term" value="P:glycolytic process"/>
    <property type="evidence" value="ECO:0000318"/>
    <property type="project" value="GO_Central"/>
</dbReference>
<dbReference type="GO" id="GO:0034059">
    <property type="term" value="P:response to anoxia"/>
    <property type="evidence" value="ECO:0000270"/>
    <property type="project" value="AgBase"/>
</dbReference>
<dbReference type="GO" id="GO:0009408">
    <property type="term" value="P:response to heat"/>
    <property type="evidence" value="ECO:0000270"/>
    <property type="project" value="AgBase"/>
</dbReference>
<dbReference type="CDD" id="cd18126">
    <property type="entry name" value="GAPDH_I_C"/>
    <property type="match status" value="1"/>
</dbReference>
<dbReference type="CDD" id="cd05214">
    <property type="entry name" value="GAPDH_I_N"/>
    <property type="match status" value="1"/>
</dbReference>
<dbReference type="FunFam" id="3.30.360.10:FF:000001">
    <property type="entry name" value="Glyceraldehyde-3-phosphate dehydrogenase"/>
    <property type="match status" value="1"/>
</dbReference>
<dbReference type="FunFam" id="3.40.50.720:FF:000020">
    <property type="entry name" value="Glyceraldehyde-3-phosphate dehydrogenase"/>
    <property type="match status" value="1"/>
</dbReference>
<dbReference type="Gene3D" id="3.30.360.10">
    <property type="entry name" value="Dihydrodipicolinate Reductase, domain 2"/>
    <property type="match status" value="1"/>
</dbReference>
<dbReference type="Gene3D" id="3.40.50.720">
    <property type="entry name" value="NAD(P)-binding Rossmann-like Domain"/>
    <property type="match status" value="1"/>
</dbReference>
<dbReference type="InterPro" id="IPR020831">
    <property type="entry name" value="GlycerAld/Erythrose_P_DH"/>
</dbReference>
<dbReference type="InterPro" id="IPR020830">
    <property type="entry name" value="GlycerAld_3-P_DH_AS"/>
</dbReference>
<dbReference type="InterPro" id="IPR020829">
    <property type="entry name" value="GlycerAld_3-P_DH_cat"/>
</dbReference>
<dbReference type="InterPro" id="IPR020828">
    <property type="entry name" value="GlycerAld_3-P_DH_NAD(P)-bd"/>
</dbReference>
<dbReference type="InterPro" id="IPR006424">
    <property type="entry name" value="Glyceraldehyde-3-P_DH_1"/>
</dbReference>
<dbReference type="InterPro" id="IPR036291">
    <property type="entry name" value="NAD(P)-bd_dom_sf"/>
</dbReference>
<dbReference type="NCBIfam" id="TIGR01534">
    <property type="entry name" value="GAPDH-I"/>
    <property type="match status" value="1"/>
</dbReference>
<dbReference type="PANTHER" id="PTHR10836">
    <property type="entry name" value="GLYCERALDEHYDE 3-PHOSPHATE DEHYDROGENASE"/>
    <property type="match status" value="1"/>
</dbReference>
<dbReference type="PANTHER" id="PTHR10836:SF112">
    <property type="entry name" value="GLYCERALDEHYDE-3-PHOSPHATE DEHYDROGENASE GAPC1, CYTOSOLIC-RELATED"/>
    <property type="match status" value="1"/>
</dbReference>
<dbReference type="Pfam" id="PF02800">
    <property type="entry name" value="Gp_dh_C"/>
    <property type="match status" value="1"/>
</dbReference>
<dbReference type="Pfam" id="PF00044">
    <property type="entry name" value="Gp_dh_N"/>
    <property type="match status" value="1"/>
</dbReference>
<dbReference type="PIRSF" id="PIRSF000149">
    <property type="entry name" value="GAP_DH"/>
    <property type="match status" value="1"/>
</dbReference>
<dbReference type="PRINTS" id="PR00078">
    <property type="entry name" value="G3PDHDRGNASE"/>
</dbReference>
<dbReference type="SMART" id="SM00846">
    <property type="entry name" value="Gp_dh_N"/>
    <property type="match status" value="1"/>
</dbReference>
<dbReference type="SUPFAM" id="SSF55347">
    <property type="entry name" value="Glyceraldehyde-3-phosphate dehydrogenase-like, C-terminal domain"/>
    <property type="match status" value="1"/>
</dbReference>
<dbReference type="SUPFAM" id="SSF51735">
    <property type="entry name" value="NAD(P)-binding Rossmann-fold domains"/>
    <property type="match status" value="1"/>
</dbReference>
<dbReference type="PROSITE" id="PS00071">
    <property type="entry name" value="GAPDH"/>
    <property type="match status" value="1"/>
</dbReference>
<keyword id="KW-0963">Cytoplasm</keyword>
<keyword id="KW-0324">Glycolysis</keyword>
<keyword id="KW-0520">NAD</keyword>
<keyword id="KW-0560">Oxidoreductase</keyword>
<keyword id="KW-1185">Reference proteome</keyword>
<reference key="1">
    <citation type="journal article" date="1997" name="Plant Mol. Biol.">
        <title>Molecular characterization and promoter analysis of the maize cytosolic glyceraldehyde 3-phosphate dehydrogenase gene family and its expression during anoxia.</title>
        <authorList>
            <person name="Manjunath S."/>
            <person name="Sachs M.M."/>
        </authorList>
    </citation>
    <scope>NUCLEOTIDE SEQUENCE [MRNA]</scope>
    <source>
        <strain>cv. B73</strain>
        <tissue>Root</tissue>
    </source>
</reference>
<reference key="2">
    <citation type="journal article" date="1989" name="Plant Cell">
        <title>Differential expression and sequence analysis of the maize glyceraldehyde-3-phosphate dehydrogenase gene family.</title>
        <authorList>
            <person name="Russell D.A."/>
            <person name="Sachs M.M."/>
        </authorList>
    </citation>
    <scope>NUCLEOTIDE SEQUENCE [MRNA] OF 104-337</scope>
    <source>
        <strain>cv. Berkeley Fast</strain>
        <tissue>Coleoptile</tissue>
    </source>
</reference>
<reference key="3">
    <citation type="journal article" date="1991" name="Mol. Gen. Genet.">
        <title>The maize cytosolic glyceraldehyde-3-phosphate dehydrogenase gene family: organ-specific expression and genetic analysis.</title>
        <authorList>
            <person name="Russell D.A."/>
            <person name="Sachs M.M."/>
        </authorList>
    </citation>
    <scope>NUCLEOTIDE SEQUENCE [MRNA] OF 104-337</scope>
    <source>
        <strain>B73</strain>
    </source>
</reference>
<sequence>MAKIKIGINGFGRIGRLVARVALQSDDVELVAVNDPFISTDYMTYMFKYDTVHGQWKHHEVKVKDSKTLLFGEKEVAVFGCRNPEEIPWGSVGAEYVVESTGVFTDQEKAAAHLKGGAKKVVISAPSKDAPMFVVGVNEKEYKSDINIVSNASCTTNCLAPLAKVINDKFGIVEGLMTTVHAITATQKTVDGPSSKDWRGGRAASFNIIPSSTGAAKAVGKVLPVLNGKLTGMSFRVPTVDVSVVDLTVRLEKSATYDEIKAAVKAEAEGSLKGILGYVEEDLVSTDFQGDSRSSIFDAKAGIALNGNFVKLVSWYDNEWGYSTRVVDLIRHMNSTK</sequence>
<gene>
    <name type="primary">GAPC3</name>
    <name type="synonym">GPC3</name>
</gene>
<feature type="chain" id="PRO_0000145607" description="Glyceraldehyde-3-phosphate dehydrogenase 3, cytosolic">
    <location>
        <begin position="1"/>
        <end position="337"/>
    </location>
</feature>
<feature type="region of interest" description="Binding to NAD">
    <location>
        <begin position="1"/>
        <end position="151"/>
    </location>
</feature>
<feature type="region of interest" description="Catalytic">
    <location>
        <begin position="152"/>
        <end position="337"/>
    </location>
</feature>
<feature type="active site" description="Nucleophile" evidence="2">
    <location>
        <position position="154"/>
    </location>
</feature>
<feature type="binding site" evidence="1">
    <location>
        <begin position="13"/>
        <end position="14"/>
    </location>
    <ligand>
        <name>NAD(+)</name>
        <dbReference type="ChEBI" id="CHEBI:57540"/>
    </ligand>
</feature>
<feature type="binding site" evidence="1">
    <location>
        <position position="35"/>
    </location>
    <ligand>
        <name>NAD(+)</name>
        <dbReference type="ChEBI" id="CHEBI:57540"/>
    </ligand>
</feature>
<feature type="binding site" evidence="1">
    <location>
        <position position="82"/>
    </location>
    <ligand>
        <name>NAD(+)</name>
        <dbReference type="ChEBI" id="CHEBI:57540"/>
    </ligand>
</feature>
<feature type="binding site" evidence="1">
    <location>
        <begin position="153"/>
        <end position="155"/>
    </location>
    <ligand>
        <name>D-glyceraldehyde 3-phosphate</name>
        <dbReference type="ChEBI" id="CHEBI:59776"/>
    </ligand>
</feature>
<feature type="binding site" evidence="1">
    <location>
        <position position="184"/>
    </location>
    <ligand>
        <name>D-glyceraldehyde 3-phosphate</name>
        <dbReference type="ChEBI" id="CHEBI:59776"/>
    </ligand>
</feature>
<feature type="binding site" evidence="1">
    <location>
        <begin position="213"/>
        <end position="214"/>
    </location>
    <ligand>
        <name>D-glyceraldehyde 3-phosphate</name>
        <dbReference type="ChEBI" id="CHEBI:59776"/>
    </ligand>
</feature>
<feature type="binding site" evidence="1">
    <location>
        <position position="236"/>
    </location>
    <ligand>
        <name>D-glyceraldehyde 3-phosphate</name>
        <dbReference type="ChEBI" id="CHEBI:59776"/>
    </ligand>
</feature>
<feature type="binding site" evidence="1">
    <location>
        <position position="318"/>
    </location>
    <ligand>
        <name>NAD(+)</name>
        <dbReference type="ChEBI" id="CHEBI:57540"/>
    </ligand>
</feature>
<feature type="site" description="Activates thiol group during catalysis" evidence="1">
    <location>
        <position position="181"/>
    </location>
</feature>
<name>G3PC3_MAIZE</name>
<accession>Q43247</accession>
<accession>Q06476</accession>
<proteinExistence type="evidence at transcript level"/>
<organism>
    <name type="scientific">Zea mays</name>
    <name type="common">Maize</name>
    <dbReference type="NCBI Taxonomy" id="4577"/>
    <lineage>
        <taxon>Eukaryota</taxon>
        <taxon>Viridiplantae</taxon>
        <taxon>Streptophyta</taxon>
        <taxon>Embryophyta</taxon>
        <taxon>Tracheophyta</taxon>
        <taxon>Spermatophyta</taxon>
        <taxon>Magnoliopsida</taxon>
        <taxon>Liliopsida</taxon>
        <taxon>Poales</taxon>
        <taxon>Poaceae</taxon>
        <taxon>PACMAD clade</taxon>
        <taxon>Panicoideae</taxon>
        <taxon>Andropogonodae</taxon>
        <taxon>Andropogoneae</taxon>
        <taxon>Tripsacinae</taxon>
        <taxon>Zea</taxon>
    </lineage>
</organism>
<evidence type="ECO:0000250" key="1"/>
<evidence type="ECO:0000255" key="2">
    <source>
        <dbReference type="PROSITE-ProRule" id="PRU10009"/>
    </source>
</evidence>
<evidence type="ECO:0000305" key="3"/>
<comment type="function">
    <text evidence="1">Key enzyme in glycolysis that catalyzes the first step of the pathway by converting D-glyceraldehyde 3-phosphate (G3P) into 3-phospho-D-glyceroyl phosphate. Essential for the maintenance of cellular ATP levels and carbohydrate metabolism (By similarity).</text>
</comment>
<comment type="catalytic activity">
    <reaction evidence="2">
        <text>D-glyceraldehyde 3-phosphate + phosphate + NAD(+) = (2R)-3-phospho-glyceroyl phosphate + NADH + H(+)</text>
        <dbReference type="Rhea" id="RHEA:10300"/>
        <dbReference type="ChEBI" id="CHEBI:15378"/>
        <dbReference type="ChEBI" id="CHEBI:43474"/>
        <dbReference type="ChEBI" id="CHEBI:57540"/>
        <dbReference type="ChEBI" id="CHEBI:57604"/>
        <dbReference type="ChEBI" id="CHEBI:57945"/>
        <dbReference type="ChEBI" id="CHEBI:59776"/>
        <dbReference type="EC" id="1.2.1.12"/>
    </reaction>
</comment>
<comment type="pathway">
    <text>Carbohydrate degradation; glycolysis; pyruvate from D-glyceraldehyde 3-phosphate: step 1/5.</text>
</comment>
<comment type="subunit">
    <text evidence="1">Homotetramer.</text>
</comment>
<comment type="subcellular location">
    <subcellularLocation>
        <location evidence="1">Cytoplasm</location>
    </subcellularLocation>
</comment>
<comment type="miscellaneous">
    <text>Plants contain two types of GAPDH: cytosolic forms which participate in glycolysis and chloroplast forms which participate in photosynthesis. All the forms are encoded by distinct genes.</text>
</comment>
<comment type="similarity">
    <text evidence="3">Belongs to the glyceraldehyde-3-phosphate dehydrogenase family.</text>
</comment>